<dbReference type="EMBL" id="CP000350">
    <property type="protein sequence ID" value="ABJ77056.1"/>
    <property type="molecule type" value="Genomic_DNA"/>
</dbReference>
<dbReference type="RefSeq" id="WP_011669443.1">
    <property type="nucleotide sequence ID" value="NC_008510.1"/>
</dbReference>
<dbReference type="SMR" id="Q04PW4"/>
<dbReference type="KEGG" id="lbj:LBJ_2633"/>
<dbReference type="HOGENOM" id="CLU_092403_0_2_12"/>
<dbReference type="Proteomes" id="UP000000656">
    <property type="component" value="Chromosome 1"/>
</dbReference>
<dbReference type="GO" id="GO:0015935">
    <property type="term" value="C:small ribosomal subunit"/>
    <property type="evidence" value="ECO:0007669"/>
    <property type="project" value="InterPro"/>
</dbReference>
<dbReference type="GO" id="GO:0019843">
    <property type="term" value="F:rRNA binding"/>
    <property type="evidence" value="ECO:0007669"/>
    <property type="project" value="UniProtKB-UniRule"/>
</dbReference>
<dbReference type="GO" id="GO:0003735">
    <property type="term" value="F:structural constituent of ribosome"/>
    <property type="evidence" value="ECO:0007669"/>
    <property type="project" value="InterPro"/>
</dbReference>
<dbReference type="GO" id="GO:0042274">
    <property type="term" value="P:ribosomal small subunit biogenesis"/>
    <property type="evidence" value="ECO:0007669"/>
    <property type="project" value="TreeGrafter"/>
</dbReference>
<dbReference type="GO" id="GO:0006412">
    <property type="term" value="P:translation"/>
    <property type="evidence" value="ECO:0007669"/>
    <property type="project" value="UniProtKB-UniRule"/>
</dbReference>
<dbReference type="CDD" id="cd00165">
    <property type="entry name" value="S4"/>
    <property type="match status" value="1"/>
</dbReference>
<dbReference type="FunFam" id="3.10.290.10:FF:000001">
    <property type="entry name" value="30S ribosomal protein S4"/>
    <property type="match status" value="1"/>
</dbReference>
<dbReference type="Gene3D" id="1.10.1050.10">
    <property type="entry name" value="Ribosomal Protein S4 Delta 41, Chain A, domain 1"/>
    <property type="match status" value="1"/>
</dbReference>
<dbReference type="Gene3D" id="3.10.290.10">
    <property type="entry name" value="RNA-binding S4 domain"/>
    <property type="match status" value="1"/>
</dbReference>
<dbReference type="HAMAP" id="MF_01306_B">
    <property type="entry name" value="Ribosomal_uS4_B"/>
    <property type="match status" value="1"/>
</dbReference>
<dbReference type="InterPro" id="IPR022801">
    <property type="entry name" value="Ribosomal_uS4"/>
</dbReference>
<dbReference type="InterPro" id="IPR005709">
    <property type="entry name" value="Ribosomal_uS4_bac-type"/>
</dbReference>
<dbReference type="InterPro" id="IPR018079">
    <property type="entry name" value="Ribosomal_uS4_CS"/>
</dbReference>
<dbReference type="InterPro" id="IPR001912">
    <property type="entry name" value="Ribosomal_uS4_N"/>
</dbReference>
<dbReference type="InterPro" id="IPR002942">
    <property type="entry name" value="S4_RNA-bd"/>
</dbReference>
<dbReference type="InterPro" id="IPR036986">
    <property type="entry name" value="S4_RNA-bd_sf"/>
</dbReference>
<dbReference type="NCBIfam" id="NF003717">
    <property type="entry name" value="PRK05327.1"/>
    <property type="match status" value="1"/>
</dbReference>
<dbReference type="NCBIfam" id="TIGR01017">
    <property type="entry name" value="rpsD_bact"/>
    <property type="match status" value="1"/>
</dbReference>
<dbReference type="PANTHER" id="PTHR11831">
    <property type="entry name" value="30S 40S RIBOSOMAL PROTEIN"/>
    <property type="match status" value="1"/>
</dbReference>
<dbReference type="PANTHER" id="PTHR11831:SF4">
    <property type="entry name" value="SMALL RIBOSOMAL SUBUNIT PROTEIN US4M"/>
    <property type="match status" value="1"/>
</dbReference>
<dbReference type="Pfam" id="PF00163">
    <property type="entry name" value="Ribosomal_S4"/>
    <property type="match status" value="1"/>
</dbReference>
<dbReference type="Pfam" id="PF01479">
    <property type="entry name" value="S4"/>
    <property type="match status" value="1"/>
</dbReference>
<dbReference type="SMART" id="SM01390">
    <property type="entry name" value="Ribosomal_S4"/>
    <property type="match status" value="1"/>
</dbReference>
<dbReference type="SMART" id="SM00363">
    <property type="entry name" value="S4"/>
    <property type="match status" value="1"/>
</dbReference>
<dbReference type="SUPFAM" id="SSF55174">
    <property type="entry name" value="Alpha-L RNA-binding motif"/>
    <property type="match status" value="1"/>
</dbReference>
<dbReference type="PROSITE" id="PS00632">
    <property type="entry name" value="RIBOSOMAL_S4"/>
    <property type="match status" value="1"/>
</dbReference>
<dbReference type="PROSITE" id="PS50889">
    <property type="entry name" value="S4"/>
    <property type="match status" value="1"/>
</dbReference>
<accession>Q04PW4</accession>
<keyword id="KW-0687">Ribonucleoprotein</keyword>
<keyword id="KW-0689">Ribosomal protein</keyword>
<keyword id="KW-0694">RNA-binding</keyword>
<keyword id="KW-0699">rRNA-binding</keyword>
<proteinExistence type="inferred from homology"/>
<evidence type="ECO:0000255" key="1">
    <source>
        <dbReference type="HAMAP-Rule" id="MF_01306"/>
    </source>
</evidence>
<evidence type="ECO:0000305" key="2"/>
<comment type="function">
    <text evidence="1">One of the primary rRNA binding proteins, it binds directly to 16S rRNA where it nucleates assembly of the body of the 30S subunit.</text>
</comment>
<comment type="function">
    <text evidence="1">With S5 and S12 plays an important role in translational accuracy.</text>
</comment>
<comment type="subunit">
    <text evidence="1">Part of the 30S ribosomal subunit. Contacts protein S5. The interaction surface between S4 and S5 is involved in control of translational fidelity.</text>
</comment>
<comment type="similarity">
    <text evidence="1">Belongs to the universal ribosomal protein uS4 family.</text>
</comment>
<reference key="1">
    <citation type="journal article" date="2006" name="Proc. Natl. Acad. Sci. U.S.A.">
        <title>Genome reduction in Leptospira borgpetersenii reflects limited transmission potential.</title>
        <authorList>
            <person name="Bulach D.M."/>
            <person name="Zuerner R.L."/>
            <person name="Wilson P."/>
            <person name="Seemann T."/>
            <person name="McGrath A."/>
            <person name="Cullen P.A."/>
            <person name="Davis J."/>
            <person name="Johnson M."/>
            <person name="Kuczek E."/>
            <person name="Alt D.P."/>
            <person name="Peterson-Burch B."/>
            <person name="Coppel R.L."/>
            <person name="Rood J.I."/>
            <person name="Davies J.K."/>
            <person name="Adler B."/>
        </authorList>
    </citation>
    <scope>NUCLEOTIDE SEQUENCE [LARGE SCALE GENOMIC DNA]</scope>
    <source>
        <strain>JB197</strain>
    </source>
</reference>
<feature type="chain" id="PRO_0000293302" description="Small ribosomal subunit protein uS4">
    <location>
        <begin position="1"/>
        <end position="207"/>
    </location>
</feature>
<feature type="domain" description="S4 RNA-binding" evidence="1">
    <location>
        <begin position="96"/>
        <end position="159"/>
    </location>
</feature>
<name>RS4_LEPBJ</name>
<gene>
    <name evidence="1" type="primary">rpsD</name>
    <name type="ordered locus">LBJ_2633</name>
</gene>
<sequence>MARYRGPVVKIMRREGVDLFLKSSYTFNKDKFHRKGPPGMPTKRKGKVSEYGTQLREKQKLKRAYGLLEKQFRNYYEEASHSHGVTGEILLQLLERRLDNVVYRLGFAVTRRQARNFIAHRHVLVNGERVDIPSYRLNVGDKVEIREKFRASTFIADNIRLSQSLQGIPSWLSADYTNFGGDVTALPERHHIDLPVKEQVIVELYSK</sequence>
<organism>
    <name type="scientific">Leptospira borgpetersenii serovar Hardjo-bovis (strain JB197)</name>
    <dbReference type="NCBI Taxonomy" id="355277"/>
    <lineage>
        <taxon>Bacteria</taxon>
        <taxon>Pseudomonadati</taxon>
        <taxon>Spirochaetota</taxon>
        <taxon>Spirochaetia</taxon>
        <taxon>Leptospirales</taxon>
        <taxon>Leptospiraceae</taxon>
        <taxon>Leptospira</taxon>
    </lineage>
</organism>
<protein>
    <recommendedName>
        <fullName evidence="1">Small ribosomal subunit protein uS4</fullName>
    </recommendedName>
    <alternativeName>
        <fullName evidence="2">30S ribosomal protein S4</fullName>
    </alternativeName>
</protein>